<organism>
    <name type="scientific">Escherichia coli O6:K15:H31 (strain 536 / UPEC)</name>
    <dbReference type="NCBI Taxonomy" id="362663"/>
    <lineage>
        <taxon>Bacteria</taxon>
        <taxon>Pseudomonadati</taxon>
        <taxon>Pseudomonadota</taxon>
        <taxon>Gammaproteobacteria</taxon>
        <taxon>Enterobacterales</taxon>
        <taxon>Enterobacteriaceae</taxon>
        <taxon>Escherichia</taxon>
    </lineage>
</organism>
<proteinExistence type="inferred from homology"/>
<dbReference type="EMBL" id="CP000247">
    <property type="protein sequence ID" value="ABG69233.1"/>
    <property type="molecule type" value="Genomic_DNA"/>
</dbReference>
<dbReference type="SMR" id="Q0TIJ6"/>
<dbReference type="KEGG" id="ecp:ECP_1222"/>
<dbReference type="HOGENOM" id="CLU_155118_1_0_6"/>
<dbReference type="Proteomes" id="UP000009182">
    <property type="component" value="Chromosome"/>
</dbReference>
<dbReference type="Gene3D" id="3.10.510.20">
    <property type="entry name" value="YcgL domain"/>
    <property type="match status" value="1"/>
</dbReference>
<dbReference type="HAMAP" id="MF_01866">
    <property type="entry name" value="UPF0745"/>
    <property type="match status" value="1"/>
</dbReference>
<dbReference type="InterPro" id="IPR038068">
    <property type="entry name" value="YcgL-like_sf"/>
</dbReference>
<dbReference type="InterPro" id="IPR027354">
    <property type="entry name" value="YcgL_dom"/>
</dbReference>
<dbReference type="PANTHER" id="PTHR38109">
    <property type="entry name" value="PROTEIN YCGL"/>
    <property type="match status" value="1"/>
</dbReference>
<dbReference type="PANTHER" id="PTHR38109:SF1">
    <property type="entry name" value="PROTEIN YCGL"/>
    <property type="match status" value="1"/>
</dbReference>
<dbReference type="Pfam" id="PF05166">
    <property type="entry name" value="YcgL"/>
    <property type="match status" value="1"/>
</dbReference>
<dbReference type="SUPFAM" id="SSF160191">
    <property type="entry name" value="YcgL-like"/>
    <property type="match status" value="1"/>
</dbReference>
<dbReference type="PROSITE" id="PS51648">
    <property type="entry name" value="YCGL"/>
    <property type="match status" value="1"/>
</dbReference>
<name>YCGL_ECOL5</name>
<feature type="chain" id="PRO_0000375301" description="Protein YcgL">
    <location>
        <begin position="1"/>
        <end position="108"/>
    </location>
</feature>
<feature type="domain" description="YcgL" evidence="1">
    <location>
        <begin position="12"/>
        <end position="96"/>
    </location>
</feature>
<sequence>MPKPGILKSKSMFCVIYRSSKRDQTYLYVEKKDDFSRVPEELMKGFGQPQLAMILPLDGRKKLVNADIEKVKQALTEQGYYLQLPPPPEDLLKQHLSVMGQKTDDTNK</sequence>
<protein>
    <recommendedName>
        <fullName evidence="1">Protein YcgL</fullName>
    </recommendedName>
</protein>
<evidence type="ECO:0000255" key="1">
    <source>
        <dbReference type="HAMAP-Rule" id="MF_01866"/>
    </source>
</evidence>
<reference key="1">
    <citation type="journal article" date="2006" name="Mol. Microbiol.">
        <title>Role of pathogenicity island-associated integrases in the genome plasticity of uropathogenic Escherichia coli strain 536.</title>
        <authorList>
            <person name="Hochhut B."/>
            <person name="Wilde C."/>
            <person name="Balling G."/>
            <person name="Middendorf B."/>
            <person name="Dobrindt U."/>
            <person name="Brzuszkiewicz E."/>
            <person name="Gottschalk G."/>
            <person name="Carniel E."/>
            <person name="Hacker J."/>
        </authorList>
    </citation>
    <scope>NUCLEOTIDE SEQUENCE [LARGE SCALE GENOMIC DNA]</scope>
    <source>
        <strain>536 / UPEC</strain>
    </source>
</reference>
<accession>Q0TIJ6</accession>
<gene>
    <name evidence="1" type="primary">ycgL</name>
    <name type="ordered locus">ECP_1222</name>
</gene>